<name>PTH_SHELP</name>
<reference key="1">
    <citation type="submission" date="2007-03" db="EMBL/GenBank/DDBJ databases">
        <title>Complete sequence of Shewanella loihica PV-4.</title>
        <authorList>
            <consortium name="US DOE Joint Genome Institute"/>
            <person name="Copeland A."/>
            <person name="Lucas S."/>
            <person name="Lapidus A."/>
            <person name="Barry K."/>
            <person name="Detter J.C."/>
            <person name="Glavina del Rio T."/>
            <person name="Hammon N."/>
            <person name="Israni S."/>
            <person name="Dalin E."/>
            <person name="Tice H."/>
            <person name="Pitluck S."/>
            <person name="Chain P."/>
            <person name="Malfatti S."/>
            <person name="Shin M."/>
            <person name="Vergez L."/>
            <person name="Schmutz J."/>
            <person name="Larimer F."/>
            <person name="Land M."/>
            <person name="Hauser L."/>
            <person name="Kyrpides N."/>
            <person name="Mikhailova N."/>
            <person name="Romine M.F."/>
            <person name="Serres G."/>
            <person name="Fredrickson J."/>
            <person name="Tiedje J."/>
            <person name="Richardson P."/>
        </authorList>
    </citation>
    <scope>NUCLEOTIDE SEQUENCE [LARGE SCALE GENOMIC DNA]</scope>
    <source>
        <strain>ATCC BAA-1088 / PV-4</strain>
    </source>
</reference>
<accession>A3QH38</accession>
<proteinExistence type="inferred from homology"/>
<protein>
    <recommendedName>
        <fullName evidence="1">Peptidyl-tRNA hydrolase</fullName>
        <shortName evidence="1">Pth</shortName>
        <ecNumber evidence="1">3.1.1.29</ecNumber>
    </recommendedName>
</protein>
<gene>
    <name evidence="1" type="primary">pth</name>
    <name type="ordered locus">Shew_2920</name>
</gene>
<sequence length="195" mass="21312">MSNIKLIVGLANPGDKYEQTRHNAGAWYVNELARVCGVSLVADSKYYGLTARATLYGKDVRLLIPTTFMNLSGKSVGALANFFRIAPDEILVAHDELDMPPGVAKFKLGGGHGGHNGLKDIIAKLANDKGFYRLRIGIGHPGDKSMVSNYVLGKAPQTEQRLIEEVIDEAVRATEVLFKEDMSKAMHRLHSYKAG</sequence>
<keyword id="KW-0963">Cytoplasm</keyword>
<keyword id="KW-0378">Hydrolase</keyword>
<keyword id="KW-1185">Reference proteome</keyword>
<keyword id="KW-0694">RNA-binding</keyword>
<keyword id="KW-0820">tRNA-binding</keyword>
<dbReference type="EC" id="3.1.1.29" evidence="1"/>
<dbReference type="EMBL" id="CP000606">
    <property type="protein sequence ID" value="ABO24786.1"/>
    <property type="molecule type" value="Genomic_DNA"/>
</dbReference>
<dbReference type="RefSeq" id="WP_011866717.1">
    <property type="nucleotide sequence ID" value="NC_009092.1"/>
</dbReference>
<dbReference type="SMR" id="A3QH38"/>
<dbReference type="STRING" id="323850.Shew_2920"/>
<dbReference type="KEGG" id="slo:Shew_2920"/>
<dbReference type="eggNOG" id="COG0193">
    <property type="taxonomic scope" value="Bacteria"/>
</dbReference>
<dbReference type="HOGENOM" id="CLU_062456_3_1_6"/>
<dbReference type="OrthoDB" id="9800507at2"/>
<dbReference type="Proteomes" id="UP000001558">
    <property type="component" value="Chromosome"/>
</dbReference>
<dbReference type="GO" id="GO:0005737">
    <property type="term" value="C:cytoplasm"/>
    <property type="evidence" value="ECO:0007669"/>
    <property type="project" value="UniProtKB-SubCell"/>
</dbReference>
<dbReference type="GO" id="GO:0004045">
    <property type="term" value="F:peptidyl-tRNA hydrolase activity"/>
    <property type="evidence" value="ECO:0007669"/>
    <property type="project" value="UniProtKB-UniRule"/>
</dbReference>
<dbReference type="GO" id="GO:0000049">
    <property type="term" value="F:tRNA binding"/>
    <property type="evidence" value="ECO:0007669"/>
    <property type="project" value="UniProtKB-UniRule"/>
</dbReference>
<dbReference type="GO" id="GO:0006515">
    <property type="term" value="P:protein quality control for misfolded or incompletely synthesized proteins"/>
    <property type="evidence" value="ECO:0007669"/>
    <property type="project" value="UniProtKB-UniRule"/>
</dbReference>
<dbReference type="GO" id="GO:0072344">
    <property type="term" value="P:rescue of stalled ribosome"/>
    <property type="evidence" value="ECO:0007669"/>
    <property type="project" value="UniProtKB-UniRule"/>
</dbReference>
<dbReference type="CDD" id="cd00462">
    <property type="entry name" value="PTH"/>
    <property type="match status" value="1"/>
</dbReference>
<dbReference type="FunFam" id="3.40.50.1470:FF:000001">
    <property type="entry name" value="Peptidyl-tRNA hydrolase"/>
    <property type="match status" value="1"/>
</dbReference>
<dbReference type="Gene3D" id="3.40.50.1470">
    <property type="entry name" value="Peptidyl-tRNA hydrolase"/>
    <property type="match status" value="1"/>
</dbReference>
<dbReference type="HAMAP" id="MF_00083">
    <property type="entry name" value="Pept_tRNA_hydro_bact"/>
    <property type="match status" value="1"/>
</dbReference>
<dbReference type="InterPro" id="IPR001328">
    <property type="entry name" value="Pept_tRNA_hydro"/>
</dbReference>
<dbReference type="InterPro" id="IPR018171">
    <property type="entry name" value="Pept_tRNA_hydro_CS"/>
</dbReference>
<dbReference type="InterPro" id="IPR036416">
    <property type="entry name" value="Pept_tRNA_hydro_sf"/>
</dbReference>
<dbReference type="NCBIfam" id="TIGR00447">
    <property type="entry name" value="pth"/>
    <property type="match status" value="1"/>
</dbReference>
<dbReference type="PANTHER" id="PTHR17224">
    <property type="entry name" value="PEPTIDYL-TRNA HYDROLASE"/>
    <property type="match status" value="1"/>
</dbReference>
<dbReference type="PANTHER" id="PTHR17224:SF1">
    <property type="entry name" value="PEPTIDYL-TRNA HYDROLASE"/>
    <property type="match status" value="1"/>
</dbReference>
<dbReference type="Pfam" id="PF01195">
    <property type="entry name" value="Pept_tRNA_hydro"/>
    <property type="match status" value="1"/>
</dbReference>
<dbReference type="SUPFAM" id="SSF53178">
    <property type="entry name" value="Peptidyl-tRNA hydrolase-like"/>
    <property type="match status" value="1"/>
</dbReference>
<dbReference type="PROSITE" id="PS01195">
    <property type="entry name" value="PEPT_TRNA_HYDROL_1"/>
    <property type="match status" value="1"/>
</dbReference>
<dbReference type="PROSITE" id="PS01196">
    <property type="entry name" value="PEPT_TRNA_HYDROL_2"/>
    <property type="match status" value="1"/>
</dbReference>
<feature type="chain" id="PRO_1000010649" description="Peptidyl-tRNA hydrolase">
    <location>
        <begin position="1"/>
        <end position="195"/>
    </location>
</feature>
<feature type="active site" description="Proton acceptor" evidence="1">
    <location>
        <position position="22"/>
    </location>
</feature>
<feature type="binding site" evidence="1">
    <location>
        <position position="17"/>
    </location>
    <ligand>
        <name>tRNA</name>
        <dbReference type="ChEBI" id="CHEBI:17843"/>
    </ligand>
</feature>
<feature type="binding site" evidence="1">
    <location>
        <position position="68"/>
    </location>
    <ligand>
        <name>tRNA</name>
        <dbReference type="ChEBI" id="CHEBI:17843"/>
    </ligand>
</feature>
<feature type="binding site" evidence="1">
    <location>
        <position position="70"/>
    </location>
    <ligand>
        <name>tRNA</name>
        <dbReference type="ChEBI" id="CHEBI:17843"/>
    </ligand>
</feature>
<feature type="binding site" evidence="1">
    <location>
        <position position="116"/>
    </location>
    <ligand>
        <name>tRNA</name>
        <dbReference type="ChEBI" id="CHEBI:17843"/>
    </ligand>
</feature>
<feature type="site" description="Discriminates between blocked and unblocked aminoacyl-tRNA" evidence="1">
    <location>
        <position position="12"/>
    </location>
</feature>
<feature type="site" description="Stabilizes the basic form of H active site to accept a proton" evidence="1">
    <location>
        <position position="95"/>
    </location>
</feature>
<comment type="function">
    <text evidence="1">Hydrolyzes ribosome-free peptidyl-tRNAs (with 1 or more amino acids incorporated), which drop off the ribosome during protein synthesis, or as a result of ribosome stalling.</text>
</comment>
<comment type="function">
    <text evidence="1">Catalyzes the release of premature peptidyl moieties from peptidyl-tRNA molecules trapped in stalled 50S ribosomal subunits, and thus maintains levels of free tRNAs and 50S ribosomes.</text>
</comment>
<comment type="catalytic activity">
    <reaction evidence="1">
        <text>an N-acyl-L-alpha-aminoacyl-tRNA + H2O = an N-acyl-L-amino acid + a tRNA + H(+)</text>
        <dbReference type="Rhea" id="RHEA:54448"/>
        <dbReference type="Rhea" id="RHEA-COMP:10123"/>
        <dbReference type="Rhea" id="RHEA-COMP:13883"/>
        <dbReference type="ChEBI" id="CHEBI:15377"/>
        <dbReference type="ChEBI" id="CHEBI:15378"/>
        <dbReference type="ChEBI" id="CHEBI:59874"/>
        <dbReference type="ChEBI" id="CHEBI:78442"/>
        <dbReference type="ChEBI" id="CHEBI:138191"/>
        <dbReference type="EC" id="3.1.1.29"/>
    </reaction>
</comment>
<comment type="subunit">
    <text evidence="1">Monomer.</text>
</comment>
<comment type="subcellular location">
    <subcellularLocation>
        <location evidence="1">Cytoplasm</location>
    </subcellularLocation>
</comment>
<comment type="similarity">
    <text evidence="1">Belongs to the PTH family.</text>
</comment>
<organism>
    <name type="scientific">Shewanella loihica (strain ATCC BAA-1088 / PV-4)</name>
    <dbReference type="NCBI Taxonomy" id="323850"/>
    <lineage>
        <taxon>Bacteria</taxon>
        <taxon>Pseudomonadati</taxon>
        <taxon>Pseudomonadota</taxon>
        <taxon>Gammaproteobacteria</taxon>
        <taxon>Alteromonadales</taxon>
        <taxon>Shewanellaceae</taxon>
        <taxon>Shewanella</taxon>
    </lineage>
</organism>
<evidence type="ECO:0000255" key="1">
    <source>
        <dbReference type="HAMAP-Rule" id="MF_00083"/>
    </source>
</evidence>